<gene>
    <name evidence="1" type="primary">ileS</name>
    <name type="ordered locus">ASA_0684</name>
</gene>
<sequence>MSDYKHTLNLPETEFPMRGDLAKREPNMLKRWYDQDLYGAIRRAKAGKPSFILHDGPPYANGSIHIGHSVNKILKDVIIKSKGLSGFDSPYVPGWDCHGLPIELKVEGMVGKPGEKVSAAEFRAECRKYAKTQIEAQKTDFIRLGVLGDWEHPYLTMDFGTEANIIRSMAKIVENGHLHKGSKPVHWCTDCGSALAEAEVEYYDKNSPSIDVRFKAVDEATVAAKFDCPEGHLGKGPISAVIWTTTPWTLPANRAIAMHADLDYALVQVEGEHPERLILAAELVKDVMDRAGIEKFHNLGYTKGVALELLRFNHPFYSFDVPVVLGDHVTLDAGTGAVHTAPGHGQEDFVVGQKYGLEVANPVGSNGVYLPDTELFAGQHVFKANAAVVEVLTERGALLHHMVFNHSYPHCWRHKTPIIFRATPQWFISMEQKGLRQRALEEIERIEKDGITQHGQSGWVPAWGKNRIQAMVENRPDWCISRQRTWGVPISLFVHKETQQLHPESVRLMHEVAKRVEQSGIQAWWDLDKAELLGSDADMYDKVPDTLDVWFDSGSTHSSVVDARPEFNGHSADLYLEGSDQHRGWFMSSLMIGVAMKDKAPYNQVLTHGFTVDGQGRKMSKSIGNVVSPQDVMNKLGADILRLWVASTDYTGEMTVSDEILKRSADAYRRIRNTARFLLANLNGFNPATDMVAAADMVVVDRWAVGRAKAAQAEIVTAFEEYNFHGVTQKLMQFCSIEMGSFYLDVIKDRQYTAKADSLARRSCQTALYHIAQAMVRWMAPIMSFTADEIWALLPGERSEFVFTEEWYDGLFGLDAGEQMDDAFWAEILTVRGEVNKALEAARGEKRIGGSLQAELTLFAKPELAERLNALADELRFVLLTSKAKVVTADTAPEGSVATERADLWLSVAQSAAAKCDRCWHHVEDVGTIAGHEEICGRCATNVEGDGETRQFA</sequence>
<evidence type="ECO:0000255" key="1">
    <source>
        <dbReference type="HAMAP-Rule" id="MF_02002"/>
    </source>
</evidence>
<comment type="function">
    <text evidence="1">Catalyzes the attachment of isoleucine to tRNA(Ile). As IleRS can inadvertently accommodate and process structurally similar amino acids such as valine, to avoid such errors it has two additional distinct tRNA(Ile)-dependent editing activities. One activity is designated as 'pretransfer' editing and involves the hydrolysis of activated Val-AMP. The other activity is designated 'posttransfer' editing and involves deacylation of mischarged Val-tRNA(Ile).</text>
</comment>
<comment type="catalytic activity">
    <reaction evidence="1">
        <text>tRNA(Ile) + L-isoleucine + ATP = L-isoleucyl-tRNA(Ile) + AMP + diphosphate</text>
        <dbReference type="Rhea" id="RHEA:11060"/>
        <dbReference type="Rhea" id="RHEA-COMP:9666"/>
        <dbReference type="Rhea" id="RHEA-COMP:9695"/>
        <dbReference type="ChEBI" id="CHEBI:30616"/>
        <dbReference type="ChEBI" id="CHEBI:33019"/>
        <dbReference type="ChEBI" id="CHEBI:58045"/>
        <dbReference type="ChEBI" id="CHEBI:78442"/>
        <dbReference type="ChEBI" id="CHEBI:78528"/>
        <dbReference type="ChEBI" id="CHEBI:456215"/>
        <dbReference type="EC" id="6.1.1.5"/>
    </reaction>
</comment>
<comment type="cofactor">
    <cofactor evidence="1">
        <name>Zn(2+)</name>
        <dbReference type="ChEBI" id="CHEBI:29105"/>
    </cofactor>
    <text evidence="1">Binds 1 zinc ion per subunit.</text>
</comment>
<comment type="subunit">
    <text evidence="1">Monomer.</text>
</comment>
<comment type="subcellular location">
    <subcellularLocation>
        <location evidence="1">Cytoplasm</location>
    </subcellularLocation>
</comment>
<comment type="domain">
    <text evidence="1">IleRS has two distinct active sites: one for aminoacylation and one for editing. The misactivated valine is translocated from the active site to the editing site, which sterically excludes the correctly activated isoleucine. The single editing site contains two valyl binding pockets, one specific for each substrate (Val-AMP or Val-tRNA(Ile)).</text>
</comment>
<comment type="similarity">
    <text evidence="1">Belongs to the class-I aminoacyl-tRNA synthetase family. IleS type 1 subfamily.</text>
</comment>
<reference key="1">
    <citation type="journal article" date="2008" name="BMC Genomics">
        <title>The genome of Aeromonas salmonicida subsp. salmonicida A449: insights into the evolution of a fish pathogen.</title>
        <authorList>
            <person name="Reith M.E."/>
            <person name="Singh R.K."/>
            <person name="Curtis B."/>
            <person name="Boyd J.M."/>
            <person name="Bouevitch A."/>
            <person name="Kimball J."/>
            <person name="Munholland J."/>
            <person name="Murphy C."/>
            <person name="Sarty D."/>
            <person name="Williams J."/>
            <person name="Nash J.H."/>
            <person name="Johnson S.C."/>
            <person name="Brown L.L."/>
        </authorList>
    </citation>
    <scope>NUCLEOTIDE SEQUENCE [LARGE SCALE GENOMIC DNA]</scope>
    <source>
        <strain>A449</strain>
    </source>
</reference>
<keyword id="KW-0030">Aminoacyl-tRNA synthetase</keyword>
<keyword id="KW-0067">ATP-binding</keyword>
<keyword id="KW-0963">Cytoplasm</keyword>
<keyword id="KW-0436">Ligase</keyword>
<keyword id="KW-0479">Metal-binding</keyword>
<keyword id="KW-0547">Nucleotide-binding</keyword>
<keyword id="KW-0648">Protein biosynthesis</keyword>
<keyword id="KW-0862">Zinc</keyword>
<name>SYI_AERS4</name>
<protein>
    <recommendedName>
        <fullName evidence="1">Isoleucine--tRNA ligase</fullName>
        <ecNumber evidence="1">6.1.1.5</ecNumber>
    </recommendedName>
    <alternativeName>
        <fullName evidence="1">Isoleucyl-tRNA synthetase</fullName>
        <shortName evidence="1">IleRS</shortName>
    </alternativeName>
</protein>
<feature type="chain" id="PRO_1000022038" description="Isoleucine--tRNA ligase">
    <location>
        <begin position="1"/>
        <end position="953"/>
    </location>
</feature>
<feature type="short sequence motif" description="'HIGH' region">
    <location>
        <begin position="58"/>
        <end position="68"/>
    </location>
</feature>
<feature type="short sequence motif" description="'KMSKS' region">
    <location>
        <begin position="618"/>
        <end position="622"/>
    </location>
</feature>
<feature type="binding site" evidence="1">
    <location>
        <position position="577"/>
    </location>
    <ligand>
        <name>L-isoleucyl-5'-AMP</name>
        <dbReference type="ChEBI" id="CHEBI:178002"/>
    </ligand>
</feature>
<feature type="binding site" evidence="1">
    <location>
        <position position="621"/>
    </location>
    <ligand>
        <name>ATP</name>
        <dbReference type="ChEBI" id="CHEBI:30616"/>
    </ligand>
</feature>
<feature type="binding site" evidence="1">
    <location>
        <position position="916"/>
    </location>
    <ligand>
        <name>Zn(2+)</name>
        <dbReference type="ChEBI" id="CHEBI:29105"/>
    </ligand>
</feature>
<feature type="binding site" evidence="1">
    <location>
        <position position="919"/>
    </location>
    <ligand>
        <name>Zn(2+)</name>
        <dbReference type="ChEBI" id="CHEBI:29105"/>
    </ligand>
</feature>
<feature type="binding site" evidence="1">
    <location>
        <position position="936"/>
    </location>
    <ligand>
        <name>Zn(2+)</name>
        <dbReference type="ChEBI" id="CHEBI:29105"/>
    </ligand>
</feature>
<feature type="binding site" evidence="1">
    <location>
        <position position="939"/>
    </location>
    <ligand>
        <name>Zn(2+)</name>
        <dbReference type="ChEBI" id="CHEBI:29105"/>
    </ligand>
</feature>
<organism>
    <name type="scientific">Aeromonas salmonicida (strain A449)</name>
    <dbReference type="NCBI Taxonomy" id="382245"/>
    <lineage>
        <taxon>Bacteria</taxon>
        <taxon>Pseudomonadati</taxon>
        <taxon>Pseudomonadota</taxon>
        <taxon>Gammaproteobacteria</taxon>
        <taxon>Aeromonadales</taxon>
        <taxon>Aeromonadaceae</taxon>
        <taxon>Aeromonas</taxon>
    </lineage>
</organism>
<accession>A4SIX5</accession>
<proteinExistence type="inferred from homology"/>
<dbReference type="EC" id="6.1.1.5" evidence="1"/>
<dbReference type="EMBL" id="CP000644">
    <property type="protein sequence ID" value="ABO88847.1"/>
    <property type="molecule type" value="Genomic_DNA"/>
</dbReference>
<dbReference type="RefSeq" id="WP_005313468.1">
    <property type="nucleotide sequence ID" value="NC_009348.1"/>
</dbReference>
<dbReference type="SMR" id="A4SIX5"/>
<dbReference type="STRING" id="29491.GCA_000820065_01810"/>
<dbReference type="KEGG" id="asa:ASA_0684"/>
<dbReference type="eggNOG" id="COG0060">
    <property type="taxonomic scope" value="Bacteria"/>
</dbReference>
<dbReference type="HOGENOM" id="CLU_001493_7_1_6"/>
<dbReference type="Proteomes" id="UP000000225">
    <property type="component" value="Chromosome"/>
</dbReference>
<dbReference type="GO" id="GO:0005829">
    <property type="term" value="C:cytosol"/>
    <property type="evidence" value="ECO:0007669"/>
    <property type="project" value="TreeGrafter"/>
</dbReference>
<dbReference type="GO" id="GO:0002161">
    <property type="term" value="F:aminoacyl-tRNA deacylase activity"/>
    <property type="evidence" value="ECO:0007669"/>
    <property type="project" value="InterPro"/>
</dbReference>
<dbReference type="GO" id="GO:0005524">
    <property type="term" value="F:ATP binding"/>
    <property type="evidence" value="ECO:0007669"/>
    <property type="project" value="UniProtKB-UniRule"/>
</dbReference>
<dbReference type="GO" id="GO:0004822">
    <property type="term" value="F:isoleucine-tRNA ligase activity"/>
    <property type="evidence" value="ECO:0007669"/>
    <property type="project" value="UniProtKB-UniRule"/>
</dbReference>
<dbReference type="GO" id="GO:0000049">
    <property type="term" value="F:tRNA binding"/>
    <property type="evidence" value="ECO:0007669"/>
    <property type="project" value="InterPro"/>
</dbReference>
<dbReference type="GO" id="GO:0008270">
    <property type="term" value="F:zinc ion binding"/>
    <property type="evidence" value="ECO:0007669"/>
    <property type="project" value="UniProtKB-UniRule"/>
</dbReference>
<dbReference type="GO" id="GO:0006428">
    <property type="term" value="P:isoleucyl-tRNA aminoacylation"/>
    <property type="evidence" value="ECO:0007669"/>
    <property type="project" value="UniProtKB-UniRule"/>
</dbReference>
<dbReference type="CDD" id="cd07960">
    <property type="entry name" value="Anticodon_Ia_Ile_BEm"/>
    <property type="match status" value="1"/>
</dbReference>
<dbReference type="CDD" id="cd00818">
    <property type="entry name" value="IleRS_core"/>
    <property type="match status" value="1"/>
</dbReference>
<dbReference type="FunFam" id="1.10.730.20:FF:000001">
    <property type="entry name" value="Isoleucine--tRNA ligase"/>
    <property type="match status" value="1"/>
</dbReference>
<dbReference type="FunFam" id="3.40.50.620:FF:000042">
    <property type="entry name" value="Isoleucine--tRNA ligase"/>
    <property type="match status" value="1"/>
</dbReference>
<dbReference type="FunFam" id="3.40.50.620:FF:000048">
    <property type="entry name" value="Isoleucine--tRNA ligase"/>
    <property type="match status" value="1"/>
</dbReference>
<dbReference type="Gene3D" id="1.10.730.20">
    <property type="match status" value="1"/>
</dbReference>
<dbReference type="Gene3D" id="3.40.50.620">
    <property type="entry name" value="HUPs"/>
    <property type="match status" value="2"/>
</dbReference>
<dbReference type="Gene3D" id="3.90.740.10">
    <property type="entry name" value="Valyl/Leucyl/Isoleucyl-tRNA synthetase, editing domain"/>
    <property type="match status" value="1"/>
</dbReference>
<dbReference type="HAMAP" id="MF_02002">
    <property type="entry name" value="Ile_tRNA_synth_type1"/>
    <property type="match status" value="1"/>
</dbReference>
<dbReference type="InterPro" id="IPR001412">
    <property type="entry name" value="aa-tRNA-synth_I_CS"/>
</dbReference>
<dbReference type="InterPro" id="IPR002300">
    <property type="entry name" value="aa-tRNA-synth_Ia"/>
</dbReference>
<dbReference type="InterPro" id="IPR033708">
    <property type="entry name" value="Anticodon_Ile_BEm"/>
</dbReference>
<dbReference type="InterPro" id="IPR002301">
    <property type="entry name" value="Ile-tRNA-ligase"/>
</dbReference>
<dbReference type="InterPro" id="IPR023585">
    <property type="entry name" value="Ile-tRNA-ligase_type1"/>
</dbReference>
<dbReference type="InterPro" id="IPR050081">
    <property type="entry name" value="Ile-tRNA_ligase"/>
</dbReference>
<dbReference type="InterPro" id="IPR013155">
    <property type="entry name" value="M/V/L/I-tRNA-synth_anticd-bd"/>
</dbReference>
<dbReference type="InterPro" id="IPR014729">
    <property type="entry name" value="Rossmann-like_a/b/a_fold"/>
</dbReference>
<dbReference type="InterPro" id="IPR009080">
    <property type="entry name" value="tRNAsynth_Ia_anticodon-bd"/>
</dbReference>
<dbReference type="InterPro" id="IPR009008">
    <property type="entry name" value="Val/Leu/Ile-tRNA-synth_edit"/>
</dbReference>
<dbReference type="InterPro" id="IPR010663">
    <property type="entry name" value="Znf_FPG/IleRS"/>
</dbReference>
<dbReference type="NCBIfam" id="TIGR00392">
    <property type="entry name" value="ileS"/>
    <property type="match status" value="1"/>
</dbReference>
<dbReference type="PANTHER" id="PTHR42765:SF1">
    <property type="entry name" value="ISOLEUCINE--TRNA LIGASE, MITOCHONDRIAL"/>
    <property type="match status" value="1"/>
</dbReference>
<dbReference type="PANTHER" id="PTHR42765">
    <property type="entry name" value="SOLEUCYL-TRNA SYNTHETASE"/>
    <property type="match status" value="1"/>
</dbReference>
<dbReference type="Pfam" id="PF08264">
    <property type="entry name" value="Anticodon_1"/>
    <property type="match status" value="1"/>
</dbReference>
<dbReference type="Pfam" id="PF00133">
    <property type="entry name" value="tRNA-synt_1"/>
    <property type="match status" value="1"/>
</dbReference>
<dbReference type="Pfam" id="PF06827">
    <property type="entry name" value="zf-FPG_IleRS"/>
    <property type="match status" value="1"/>
</dbReference>
<dbReference type="PRINTS" id="PR00984">
    <property type="entry name" value="TRNASYNTHILE"/>
</dbReference>
<dbReference type="SUPFAM" id="SSF47323">
    <property type="entry name" value="Anticodon-binding domain of a subclass of class I aminoacyl-tRNA synthetases"/>
    <property type="match status" value="1"/>
</dbReference>
<dbReference type="SUPFAM" id="SSF52374">
    <property type="entry name" value="Nucleotidylyl transferase"/>
    <property type="match status" value="1"/>
</dbReference>
<dbReference type="SUPFAM" id="SSF50677">
    <property type="entry name" value="ValRS/IleRS/LeuRS editing domain"/>
    <property type="match status" value="1"/>
</dbReference>
<dbReference type="PROSITE" id="PS00178">
    <property type="entry name" value="AA_TRNA_LIGASE_I"/>
    <property type="match status" value="1"/>
</dbReference>